<sequence>MNKRELESAIVTDFSKRMSYGDYLCLDQLLDCQHPLSNPQHHDEMLFVVQHQTSELWMKLMLHELQAARILVQQDKLSHCFKILARVKQIQRLLFEQWAVLETLTPSEYVEFRDVLGNSSGFQSHQYRSIEFLLGNKNAAMLAVFSNDADKHAALKAILEAPSLYDEYLLYLSRHGLPIPQECIERDWTQPYQRNPDLLPAFKEIYDHPQKYWEAYEMAEKLVDIEESFHLWRFRHMKTVERIIGFKTGTGGSSGVSFLKKALELTFFPELLDVRTEIGA</sequence>
<organism>
    <name type="scientific">Serratia proteamaculans (strain 568)</name>
    <dbReference type="NCBI Taxonomy" id="399741"/>
    <lineage>
        <taxon>Bacteria</taxon>
        <taxon>Pseudomonadati</taxon>
        <taxon>Pseudomonadota</taxon>
        <taxon>Gammaproteobacteria</taxon>
        <taxon>Enterobacterales</taxon>
        <taxon>Yersiniaceae</taxon>
        <taxon>Serratia</taxon>
    </lineage>
</organism>
<name>T23O_SERP5</name>
<accession>A8GG83</accession>
<keyword id="KW-0223">Dioxygenase</keyword>
<keyword id="KW-0349">Heme</keyword>
<keyword id="KW-0408">Iron</keyword>
<keyword id="KW-0479">Metal-binding</keyword>
<keyword id="KW-0560">Oxidoreductase</keyword>
<keyword id="KW-0823">Tryptophan catabolism</keyword>
<protein>
    <recommendedName>
        <fullName evidence="1">Tryptophan 2,3-dioxygenase</fullName>
        <shortName evidence="1">TDO</shortName>
        <ecNumber evidence="1">1.13.11.11</ecNumber>
    </recommendedName>
    <alternativeName>
        <fullName evidence="1">Tryptamin 2,3-dioxygenase</fullName>
    </alternativeName>
    <alternativeName>
        <fullName evidence="1">Tryptophan oxygenase</fullName>
        <shortName evidence="1">TO</shortName>
        <shortName evidence="1">TRPO</shortName>
    </alternativeName>
    <alternativeName>
        <fullName evidence="1">Tryptophan pyrrolase</fullName>
    </alternativeName>
    <alternativeName>
        <fullName evidence="1">Tryptophanase</fullName>
    </alternativeName>
</protein>
<reference key="1">
    <citation type="submission" date="2007-09" db="EMBL/GenBank/DDBJ databases">
        <title>Complete sequence of chromosome of Serratia proteamaculans 568.</title>
        <authorList>
            <consortium name="US DOE Joint Genome Institute"/>
            <person name="Copeland A."/>
            <person name="Lucas S."/>
            <person name="Lapidus A."/>
            <person name="Barry K."/>
            <person name="Glavina del Rio T."/>
            <person name="Dalin E."/>
            <person name="Tice H."/>
            <person name="Pitluck S."/>
            <person name="Chain P."/>
            <person name="Malfatti S."/>
            <person name="Shin M."/>
            <person name="Vergez L."/>
            <person name="Schmutz J."/>
            <person name="Larimer F."/>
            <person name="Land M."/>
            <person name="Hauser L."/>
            <person name="Kyrpides N."/>
            <person name="Kim E."/>
            <person name="Taghavi S."/>
            <person name="Newman L."/>
            <person name="Vangronsveld J."/>
            <person name="van der Lelie D."/>
            <person name="Richardson P."/>
        </authorList>
    </citation>
    <scope>NUCLEOTIDE SEQUENCE [LARGE SCALE GENOMIC DNA]</scope>
    <source>
        <strain>568</strain>
    </source>
</reference>
<gene>
    <name evidence="1" type="primary">kynA</name>
    <name type="ordered locus">Spro_3022</name>
</gene>
<proteinExistence type="inferred from homology"/>
<feature type="chain" id="PRO_0000360133" description="Tryptophan 2,3-dioxygenase">
    <location>
        <begin position="1"/>
        <end position="280"/>
    </location>
</feature>
<feature type="binding site" evidence="1">
    <location>
        <begin position="47"/>
        <end position="51"/>
    </location>
    <ligand>
        <name>substrate</name>
    </ligand>
</feature>
<feature type="binding site" evidence="1">
    <location>
        <position position="109"/>
    </location>
    <ligand>
        <name>substrate</name>
    </ligand>
</feature>
<feature type="binding site" evidence="1">
    <location>
        <position position="113"/>
    </location>
    <ligand>
        <name>substrate</name>
    </ligand>
</feature>
<feature type="binding site" description="axial binding residue" evidence="1">
    <location>
        <position position="236"/>
    </location>
    <ligand>
        <name>heme</name>
        <dbReference type="ChEBI" id="CHEBI:30413"/>
    </ligand>
    <ligandPart>
        <name>Fe</name>
        <dbReference type="ChEBI" id="CHEBI:18248"/>
    </ligandPart>
</feature>
<feature type="binding site" evidence="1">
    <location>
        <position position="250"/>
    </location>
    <ligand>
        <name>substrate</name>
    </ligand>
</feature>
<comment type="function">
    <text evidence="1">Heme-dependent dioxygenase that catalyzes the oxidative cleavage of the L-tryptophan (L-Trp) pyrrole ring and converts L-tryptophan to N-formyl-L-kynurenine. Catalyzes the oxidative cleavage of the indole moiety.</text>
</comment>
<comment type="catalytic activity">
    <reaction evidence="1">
        <text>L-tryptophan + O2 = N-formyl-L-kynurenine</text>
        <dbReference type="Rhea" id="RHEA:24536"/>
        <dbReference type="ChEBI" id="CHEBI:15379"/>
        <dbReference type="ChEBI" id="CHEBI:57912"/>
        <dbReference type="ChEBI" id="CHEBI:58629"/>
        <dbReference type="EC" id="1.13.11.11"/>
    </reaction>
</comment>
<comment type="cofactor">
    <cofactor evidence="1">
        <name>heme</name>
        <dbReference type="ChEBI" id="CHEBI:30413"/>
    </cofactor>
    <text evidence="1">Binds 1 heme group per subunit.</text>
</comment>
<comment type="pathway">
    <text evidence="1">Amino-acid degradation; L-tryptophan degradation via kynurenine pathway; L-kynurenine from L-tryptophan: step 1/2.</text>
</comment>
<comment type="subunit">
    <text evidence="1">Homotetramer.</text>
</comment>
<comment type="similarity">
    <text evidence="1">Belongs to the tryptophan 2,3-dioxygenase family.</text>
</comment>
<dbReference type="EC" id="1.13.11.11" evidence="1"/>
<dbReference type="EMBL" id="CP000826">
    <property type="protein sequence ID" value="ABV42123.1"/>
    <property type="molecule type" value="Genomic_DNA"/>
</dbReference>
<dbReference type="SMR" id="A8GG83"/>
<dbReference type="STRING" id="399741.Spro_3022"/>
<dbReference type="KEGG" id="spe:Spro_3022"/>
<dbReference type="eggNOG" id="COG3483">
    <property type="taxonomic scope" value="Bacteria"/>
</dbReference>
<dbReference type="HOGENOM" id="CLU_063240_0_0_6"/>
<dbReference type="OrthoDB" id="9776847at2"/>
<dbReference type="UniPathway" id="UPA00333">
    <property type="reaction ID" value="UER00453"/>
</dbReference>
<dbReference type="GO" id="GO:0020037">
    <property type="term" value="F:heme binding"/>
    <property type="evidence" value="ECO:0000250"/>
    <property type="project" value="UniProtKB"/>
</dbReference>
<dbReference type="GO" id="GO:0046872">
    <property type="term" value="F:metal ion binding"/>
    <property type="evidence" value="ECO:0007669"/>
    <property type="project" value="UniProtKB-KW"/>
</dbReference>
<dbReference type="GO" id="GO:0004833">
    <property type="term" value="F:tryptophan 2,3-dioxygenase activity"/>
    <property type="evidence" value="ECO:0000250"/>
    <property type="project" value="UniProtKB"/>
</dbReference>
<dbReference type="GO" id="GO:0019442">
    <property type="term" value="P:L-tryptophan catabolic process to acetyl-CoA"/>
    <property type="evidence" value="ECO:0007669"/>
    <property type="project" value="TreeGrafter"/>
</dbReference>
<dbReference type="GO" id="GO:0019441">
    <property type="term" value="P:L-tryptophan catabolic process to kynurenine"/>
    <property type="evidence" value="ECO:0000250"/>
    <property type="project" value="UniProtKB"/>
</dbReference>
<dbReference type="FunFam" id="1.20.58.480:FF:000001">
    <property type="entry name" value="Tryptophan 2,3-dioxygenase"/>
    <property type="match status" value="1"/>
</dbReference>
<dbReference type="Gene3D" id="1.20.58.480">
    <property type="match status" value="1"/>
</dbReference>
<dbReference type="HAMAP" id="MF_01972">
    <property type="entry name" value="T23O"/>
    <property type="match status" value="1"/>
</dbReference>
<dbReference type="InterPro" id="IPR037217">
    <property type="entry name" value="Trp/Indoleamine_2_3_dOase-like"/>
</dbReference>
<dbReference type="InterPro" id="IPR017485">
    <property type="entry name" value="Trp_2-3-dOase_bac"/>
</dbReference>
<dbReference type="InterPro" id="IPR004981">
    <property type="entry name" value="Trp_2_3_dOase"/>
</dbReference>
<dbReference type="NCBIfam" id="TIGR03036">
    <property type="entry name" value="trp_2_3_diox"/>
    <property type="match status" value="1"/>
</dbReference>
<dbReference type="PANTHER" id="PTHR10138">
    <property type="entry name" value="TRYPTOPHAN 2,3-DIOXYGENASE"/>
    <property type="match status" value="1"/>
</dbReference>
<dbReference type="PANTHER" id="PTHR10138:SF0">
    <property type="entry name" value="TRYPTOPHAN 2,3-DIOXYGENASE"/>
    <property type="match status" value="1"/>
</dbReference>
<dbReference type="Pfam" id="PF03301">
    <property type="entry name" value="Trp_dioxygenase"/>
    <property type="match status" value="1"/>
</dbReference>
<dbReference type="SUPFAM" id="SSF140959">
    <property type="entry name" value="Indolic compounds 2,3-dioxygenase-like"/>
    <property type="match status" value="1"/>
</dbReference>
<evidence type="ECO:0000255" key="1">
    <source>
        <dbReference type="HAMAP-Rule" id="MF_01972"/>
    </source>
</evidence>